<organism>
    <name type="scientific">Rattus norvegicus</name>
    <name type="common">Rat</name>
    <dbReference type="NCBI Taxonomy" id="10116"/>
    <lineage>
        <taxon>Eukaryota</taxon>
        <taxon>Metazoa</taxon>
        <taxon>Chordata</taxon>
        <taxon>Craniata</taxon>
        <taxon>Vertebrata</taxon>
        <taxon>Euteleostomi</taxon>
        <taxon>Mammalia</taxon>
        <taxon>Eutheria</taxon>
        <taxon>Euarchontoglires</taxon>
        <taxon>Glires</taxon>
        <taxon>Rodentia</taxon>
        <taxon>Myomorpha</taxon>
        <taxon>Muroidea</taxon>
        <taxon>Muridae</taxon>
        <taxon>Murinae</taxon>
        <taxon>Rattus</taxon>
    </lineage>
</organism>
<accession>Q9JM00</accession>
<protein>
    <recommendedName>
        <fullName>Ventral anterior homeobox 1</fullName>
    </recommendedName>
</protein>
<sequence>MFGKTDKMDVRCHSDTEAARVSKNAHKESREIKGAEGSLPAAFLKEPQGAFSASGASEDCNKSKSNSSADPDYCRRILVRDAKGSIREIILPKGLDLDRPKRTRTSFTAEQLYRLEMEFQRCQYVVGRERTELARQLNLSETQVKVWFQNRRTKQKKDQGKDSELRSVVSETAATCSVLRLLEQGRLLSPPGLPALLPPCATGALGSALRGPSLPALGAGAAAGSAAAAAAAATAPGPAGAASQHPPAVGGAPGPGPAGPGGLHAGAPTASHGLFSLPVPSLLGSVASRLSSAPLTMAGSLAGNLQELSARYLSSSAFEPYSRTNNKEGAEKKALD</sequence>
<comment type="function">
    <text evidence="1">Transcription factor that may function in dorsoventral specification of the forebrain. Required for axon guidance and major tract formation in the developing forebrain. May contribute to the differentiation of the neuroretina, pigmented epithelium and optic stalk (By similarity).</text>
</comment>
<comment type="subcellular location">
    <subcellularLocation>
        <location evidence="2">Nucleus</location>
    </subcellularLocation>
</comment>
<comment type="similarity">
    <text evidence="4">Belongs to the EMX homeobox family.</text>
</comment>
<gene>
    <name type="primary">Vax1</name>
</gene>
<feature type="chain" id="PRO_0000240524" description="Ventral anterior homeobox 1">
    <location>
        <begin position="1"/>
        <end position="336"/>
    </location>
</feature>
<feature type="DNA-binding region" description="Homeobox" evidence="2">
    <location>
        <begin position="100"/>
        <end position="159"/>
    </location>
</feature>
<feature type="region of interest" description="Disordered" evidence="3">
    <location>
        <begin position="1"/>
        <end position="39"/>
    </location>
</feature>
<feature type="region of interest" description="Disordered" evidence="3">
    <location>
        <begin position="50"/>
        <end position="69"/>
    </location>
</feature>
<feature type="region of interest" description="Disordered" evidence="3">
    <location>
        <begin position="236"/>
        <end position="267"/>
    </location>
</feature>
<feature type="region of interest" description="Disordered" evidence="3">
    <location>
        <begin position="316"/>
        <end position="336"/>
    </location>
</feature>
<feature type="compositionally biased region" description="Basic and acidic residues" evidence="3">
    <location>
        <begin position="1"/>
        <end position="34"/>
    </location>
</feature>
<feature type="compositionally biased region" description="Low complexity" evidence="3">
    <location>
        <begin position="236"/>
        <end position="250"/>
    </location>
</feature>
<feature type="compositionally biased region" description="Basic and acidic residues" evidence="3">
    <location>
        <begin position="325"/>
        <end position="336"/>
    </location>
</feature>
<keyword id="KW-0217">Developmental protein</keyword>
<keyword id="KW-0238">DNA-binding</keyword>
<keyword id="KW-0371">Homeobox</keyword>
<keyword id="KW-0539">Nucleus</keyword>
<keyword id="KW-1185">Reference proteome</keyword>
<keyword id="KW-0804">Transcription</keyword>
<keyword id="KW-0805">Transcription regulation</keyword>
<evidence type="ECO:0000250" key="1"/>
<evidence type="ECO:0000255" key="2">
    <source>
        <dbReference type="PROSITE-ProRule" id="PRU00108"/>
    </source>
</evidence>
<evidence type="ECO:0000256" key="3">
    <source>
        <dbReference type="SAM" id="MobiDB-lite"/>
    </source>
</evidence>
<evidence type="ECO:0000305" key="4"/>
<reference key="1">
    <citation type="submission" date="1998-12" db="EMBL/GenBank/DDBJ databases">
        <title>Rat Vax1: a novel member of the Vax homeobox gene subfamily.</title>
        <authorList>
            <person name="Bertuzzi S."/>
            <person name="Mui S.H."/>
            <person name="Lemke G."/>
        </authorList>
    </citation>
    <scope>NUCLEOTIDE SEQUENCE [MRNA]</scope>
    <source>
        <strain>Sprague-Dawley</strain>
    </source>
</reference>
<proteinExistence type="evidence at transcript level"/>
<dbReference type="EMBL" id="AF113515">
    <property type="protein sequence ID" value="AAF25690.1"/>
    <property type="molecule type" value="mRNA"/>
</dbReference>
<dbReference type="RefSeq" id="NP_072158.1">
    <property type="nucleotide sequence ID" value="NM_022636.1"/>
</dbReference>
<dbReference type="SMR" id="Q9JM00"/>
<dbReference type="FunCoup" id="Q9JM00">
    <property type="interactions" value="158"/>
</dbReference>
<dbReference type="STRING" id="10116.ENSRNOP00000011743"/>
<dbReference type="PhosphoSitePlus" id="Q9JM00"/>
<dbReference type="PaxDb" id="10116-ENSRNOP00000011743"/>
<dbReference type="Ensembl" id="ENSRNOT00000011743.3">
    <property type="protein sequence ID" value="ENSRNOP00000011743.1"/>
    <property type="gene ID" value="ENSRNOG00000008824.5"/>
</dbReference>
<dbReference type="GeneID" id="64571"/>
<dbReference type="KEGG" id="rno:64571"/>
<dbReference type="AGR" id="RGD:621132"/>
<dbReference type="CTD" id="11023"/>
<dbReference type="RGD" id="621132">
    <property type="gene designation" value="Vax1"/>
</dbReference>
<dbReference type="eggNOG" id="KOG0843">
    <property type="taxonomic scope" value="Eukaryota"/>
</dbReference>
<dbReference type="GeneTree" id="ENSGT00940000161152"/>
<dbReference type="HOGENOM" id="CLU_071850_0_0_1"/>
<dbReference type="InParanoid" id="Q9JM00"/>
<dbReference type="OMA" id="DCNKSKA"/>
<dbReference type="OrthoDB" id="6159439at2759"/>
<dbReference type="PhylomeDB" id="Q9JM00"/>
<dbReference type="TreeFam" id="TF319504"/>
<dbReference type="PRO" id="PR:Q9JM00"/>
<dbReference type="Proteomes" id="UP000002494">
    <property type="component" value="Chromosome 1"/>
</dbReference>
<dbReference type="Bgee" id="ENSRNOG00000008824">
    <property type="expression patterns" value="Expressed in testis"/>
</dbReference>
<dbReference type="GO" id="GO:0005634">
    <property type="term" value="C:nucleus"/>
    <property type="evidence" value="ECO:0000266"/>
    <property type="project" value="RGD"/>
</dbReference>
<dbReference type="GO" id="GO:0031490">
    <property type="term" value="F:chromatin DNA binding"/>
    <property type="evidence" value="ECO:0000266"/>
    <property type="project" value="RGD"/>
</dbReference>
<dbReference type="GO" id="GO:0003700">
    <property type="term" value="F:DNA-binding transcription factor activity"/>
    <property type="evidence" value="ECO:0000266"/>
    <property type="project" value="RGD"/>
</dbReference>
<dbReference type="GO" id="GO:0000981">
    <property type="term" value="F:DNA-binding transcription factor activity, RNA polymerase II-specific"/>
    <property type="evidence" value="ECO:0000318"/>
    <property type="project" value="GO_Central"/>
</dbReference>
<dbReference type="GO" id="GO:0001227">
    <property type="term" value="F:DNA-binding transcription repressor activity, RNA polymerase II-specific"/>
    <property type="evidence" value="ECO:0000266"/>
    <property type="project" value="RGD"/>
</dbReference>
<dbReference type="GO" id="GO:0000978">
    <property type="term" value="F:RNA polymerase II cis-regulatory region sequence-specific DNA binding"/>
    <property type="evidence" value="ECO:0000318"/>
    <property type="project" value="GO_Central"/>
</dbReference>
<dbReference type="GO" id="GO:0001162">
    <property type="term" value="F:RNA polymerase II intronic transcription regulatory region sequence-specific DNA binding"/>
    <property type="evidence" value="ECO:0000266"/>
    <property type="project" value="RGD"/>
</dbReference>
<dbReference type="GO" id="GO:1990837">
    <property type="term" value="F:sequence-specific double-stranded DNA binding"/>
    <property type="evidence" value="ECO:0000266"/>
    <property type="project" value="RGD"/>
</dbReference>
<dbReference type="GO" id="GO:0048708">
    <property type="term" value="P:astrocyte differentiation"/>
    <property type="evidence" value="ECO:0000266"/>
    <property type="project" value="RGD"/>
</dbReference>
<dbReference type="GO" id="GO:0007411">
    <property type="term" value="P:axon guidance"/>
    <property type="evidence" value="ECO:0000266"/>
    <property type="project" value="RGD"/>
</dbReference>
<dbReference type="GO" id="GO:0007420">
    <property type="term" value="P:brain development"/>
    <property type="evidence" value="ECO:0000266"/>
    <property type="project" value="RGD"/>
</dbReference>
<dbReference type="GO" id="GO:0043010">
    <property type="term" value="P:camera-type eye development"/>
    <property type="evidence" value="ECO:0000266"/>
    <property type="project" value="RGD"/>
</dbReference>
<dbReference type="GO" id="GO:0007417">
    <property type="term" value="P:central nervous system development"/>
    <property type="evidence" value="ECO:0000266"/>
    <property type="project" value="RGD"/>
</dbReference>
<dbReference type="GO" id="GO:0010001">
    <property type="term" value="P:glial cell differentiation"/>
    <property type="evidence" value="ECO:0000266"/>
    <property type="project" value="RGD"/>
</dbReference>
<dbReference type="GO" id="GO:0007406">
    <property type="term" value="P:negative regulation of neuroblast proliferation"/>
    <property type="evidence" value="ECO:0000266"/>
    <property type="project" value="RGD"/>
</dbReference>
<dbReference type="GO" id="GO:0000122">
    <property type="term" value="P:negative regulation of transcription by RNA polymerase II"/>
    <property type="evidence" value="ECO:0000266"/>
    <property type="project" value="RGD"/>
</dbReference>
<dbReference type="GO" id="GO:0007399">
    <property type="term" value="P:nervous system development"/>
    <property type="evidence" value="ECO:0000266"/>
    <property type="project" value="RGD"/>
</dbReference>
<dbReference type="GO" id="GO:0007405">
    <property type="term" value="P:neuroblast proliferation"/>
    <property type="evidence" value="ECO:0000266"/>
    <property type="project" value="RGD"/>
</dbReference>
<dbReference type="GO" id="GO:0060563">
    <property type="term" value="P:neuroepithelial cell differentiation"/>
    <property type="evidence" value="ECO:0000266"/>
    <property type="project" value="RGD"/>
</dbReference>
<dbReference type="GO" id="GO:0030182">
    <property type="term" value="P:neuron differentiation"/>
    <property type="evidence" value="ECO:0000318"/>
    <property type="project" value="GO_Central"/>
</dbReference>
<dbReference type="GO" id="GO:0001764">
    <property type="term" value="P:neuron migration"/>
    <property type="evidence" value="ECO:0000266"/>
    <property type="project" value="RGD"/>
</dbReference>
<dbReference type="GO" id="GO:0006357">
    <property type="term" value="P:regulation of transcription by RNA polymerase II"/>
    <property type="evidence" value="ECO:0000318"/>
    <property type="project" value="GO_Central"/>
</dbReference>
<dbReference type="GO" id="GO:0060021">
    <property type="term" value="P:roof of mouth development"/>
    <property type="evidence" value="ECO:0000266"/>
    <property type="project" value="RGD"/>
</dbReference>
<dbReference type="GO" id="GO:0035914">
    <property type="term" value="P:skeletal muscle cell differentiation"/>
    <property type="evidence" value="ECO:0000266"/>
    <property type="project" value="RGD"/>
</dbReference>
<dbReference type="CDD" id="cd00086">
    <property type="entry name" value="homeodomain"/>
    <property type="match status" value="1"/>
</dbReference>
<dbReference type="FunFam" id="1.10.10.60:FF:000375">
    <property type="entry name" value="Ventral anterior homeobox 1"/>
    <property type="match status" value="1"/>
</dbReference>
<dbReference type="Gene3D" id="1.10.10.60">
    <property type="entry name" value="Homeodomain-like"/>
    <property type="match status" value="1"/>
</dbReference>
<dbReference type="InterPro" id="IPR050877">
    <property type="entry name" value="EMX-VAX-Noto_Homeobox_TFs"/>
</dbReference>
<dbReference type="InterPro" id="IPR001356">
    <property type="entry name" value="HD"/>
</dbReference>
<dbReference type="InterPro" id="IPR017970">
    <property type="entry name" value="Homeobox_CS"/>
</dbReference>
<dbReference type="InterPro" id="IPR009057">
    <property type="entry name" value="Homeodomain-like_sf"/>
</dbReference>
<dbReference type="InterPro" id="IPR000047">
    <property type="entry name" value="HTH_motif"/>
</dbReference>
<dbReference type="PANTHER" id="PTHR24339">
    <property type="entry name" value="HOMEOBOX PROTEIN EMX-RELATED"/>
    <property type="match status" value="1"/>
</dbReference>
<dbReference type="PANTHER" id="PTHR24339:SF32">
    <property type="entry name" value="VENTRAL ANTERIOR HOMEOBOX 1"/>
    <property type="match status" value="1"/>
</dbReference>
<dbReference type="Pfam" id="PF00046">
    <property type="entry name" value="Homeodomain"/>
    <property type="match status" value="1"/>
</dbReference>
<dbReference type="PRINTS" id="PR00031">
    <property type="entry name" value="HTHREPRESSR"/>
</dbReference>
<dbReference type="SMART" id="SM00389">
    <property type="entry name" value="HOX"/>
    <property type="match status" value="1"/>
</dbReference>
<dbReference type="SUPFAM" id="SSF46689">
    <property type="entry name" value="Homeodomain-like"/>
    <property type="match status" value="1"/>
</dbReference>
<dbReference type="PROSITE" id="PS00027">
    <property type="entry name" value="HOMEOBOX_1"/>
    <property type="match status" value="1"/>
</dbReference>
<dbReference type="PROSITE" id="PS50071">
    <property type="entry name" value="HOMEOBOX_2"/>
    <property type="match status" value="1"/>
</dbReference>
<name>VAX1_RAT</name>